<organism>
    <name type="scientific">Archaeoglobus fulgidus (strain ATCC 49558 / DSM 4304 / JCM 9628 / NBRC 100126 / VC-16)</name>
    <dbReference type="NCBI Taxonomy" id="224325"/>
    <lineage>
        <taxon>Archaea</taxon>
        <taxon>Methanobacteriati</taxon>
        <taxon>Methanobacteriota</taxon>
        <taxon>Archaeoglobi</taxon>
        <taxon>Archaeoglobales</taxon>
        <taxon>Archaeoglobaceae</taxon>
        <taxon>Archaeoglobus</taxon>
    </lineage>
</organism>
<evidence type="ECO:0000255" key="1"/>
<name>Y307_ARCFU</name>
<reference key="1">
    <citation type="journal article" date="1997" name="Nature">
        <title>The complete genome sequence of the hyperthermophilic, sulphate-reducing archaeon Archaeoglobus fulgidus.</title>
        <authorList>
            <person name="Klenk H.-P."/>
            <person name="Clayton R.A."/>
            <person name="Tomb J.-F."/>
            <person name="White O."/>
            <person name="Nelson K.E."/>
            <person name="Ketchum K.A."/>
            <person name="Dodson R.J."/>
            <person name="Gwinn M.L."/>
            <person name="Hickey E.K."/>
            <person name="Peterson J.D."/>
            <person name="Richardson D.L."/>
            <person name="Kerlavage A.R."/>
            <person name="Graham D.E."/>
            <person name="Kyrpides N.C."/>
            <person name="Fleischmann R.D."/>
            <person name="Quackenbush J."/>
            <person name="Lee N.H."/>
            <person name="Sutton G.G."/>
            <person name="Gill S.R."/>
            <person name="Kirkness E.F."/>
            <person name="Dougherty B.A."/>
            <person name="McKenney K."/>
            <person name="Adams M.D."/>
            <person name="Loftus B.J."/>
            <person name="Peterson S.N."/>
            <person name="Reich C.I."/>
            <person name="McNeil L.K."/>
            <person name="Badger J.H."/>
            <person name="Glodek A."/>
            <person name="Zhou L."/>
            <person name="Overbeek R."/>
            <person name="Gocayne J.D."/>
            <person name="Weidman J.F."/>
            <person name="McDonald L.A."/>
            <person name="Utterback T.R."/>
            <person name="Cotton M.D."/>
            <person name="Spriggs T."/>
            <person name="Artiach P."/>
            <person name="Kaine B.P."/>
            <person name="Sykes S.M."/>
            <person name="Sadow P.W."/>
            <person name="D'Andrea K.P."/>
            <person name="Bowman C."/>
            <person name="Fujii C."/>
            <person name="Garland S.A."/>
            <person name="Mason T.M."/>
            <person name="Olsen G.J."/>
            <person name="Fraser C.M."/>
            <person name="Smith H.O."/>
            <person name="Woese C.R."/>
            <person name="Venter J.C."/>
        </authorList>
    </citation>
    <scope>NUCLEOTIDE SEQUENCE [LARGE SCALE GENOMIC DNA]</scope>
    <source>
        <strain>ATCC 49558 / DSM 4304 / JCM 9628 / NBRC 100126 / VC-16</strain>
    </source>
</reference>
<keyword id="KW-1185">Reference proteome</keyword>
<keyword id="KW-0732">Signal</keyword>
<feature type="signal peptide" evidence="1">
    <location>
        <begin position="1"/>
        <end position="15"/>
    </location>
</feature>
<feature type="chain" id="PRO_0000013637" description="Uncharacterized protein AF_0307">
    <location>
        <begin position="16"/>
        <end position="253"/>
    </location>
</feature>
<proteinExistence type="inferred from homology"/>
<dbReference type="EMBL" id="AE000782">
    <property type="protein sequence ID" value="AAB90927.1"/>
    <property type="molecule type" value="Genomic_DNA"/>
</dbReference>
<dbReference type="PIR" id="C69288">
    <property type="entry name" value="C69288"/>
</dbReference>
<dbReference type="RefSeq" id="WP_010877815.1">
    <property type="nucleotide sequence ID" value="NC_000917.1"/>
</dbReference>
<dbReference type="SMR" id="O29937"/>
<dbReference type="PaxDb" id="224325-AF_0307"/>
<dbReference type="EnsemblBacteria" id="AAB90927">
    <property type="protein sequence ID" value="AAB90927"/>
    <property type="gene ID" value="AF_0307"/>
</dbReference>
<dbReference type="GeneID" id="1483522"/>
<dbReference type="KEGG" id="afu:AF_0307"/>
<dbReference type="HOGENOM" id="CLU_1068457_0_0_2"/>
<dbReference type="Proteomes" id="UP000002199">
    <property type="component" value="Chromosome"/>
</dbReference>
<dbReference type="GO" id="GO:0016020">
    <property type="term" value="C:membrane"/>
    <property type="evidence" value="ECO:0007669"/>
    <property type="project" value="InterPro"/>
</dbReference>
<dbReference type="GO" id="GO:0008146">
    <property type="term" value="F:sulfotransferase activity"/>
    <property type="evidence" value="ECO:0007669"/>
    <property type="project" value="InterPro"/>
</dbReference>
<dbReference type="Gene3D" id="3.40.50.300">
    <property type="entry name" value="P-loop containing nucleotide triphosphate hydrolases"/>
    <property type="match status" value="1"/>
</dbReference>
<dbReference type="InterPro" id="IPR027417">
    <property type="entry name" value="P-loop_NTPase"/>
</dbReference>
<dbReference type="InterPro" id="IPR005331">
    <property type="entry name" value="Sulfotransferase"/>
</dbReference>
<dbReference type="Pfam" id="PF03567">
    <property type="entry name" value="Sulfotransfer_2"/>
    <property type="match status" value="1"/>
</dbReference>
<dbReference type="SUPFAM" id="SSF52540">
    <property type="entry name" value="P-loop containing nucleoside triphosphate hydrolases"/>
    <property type="match status" value="1"/>
</dbReference>
<sequence>MNRVILFHFHFFKNAGSAVDYILEKNFGDRFVKKEFKLWPYYENIKEVIKWIENESDAVAFSSHTARLFDSTLLERRGIKIIPIIFVRHPIIRIHSAYHYERKQVDIFRPGPVIARNTDFKGYVEIRLAIPRQEFNVSNFHVFRLADMLHGEKNMKPLEKALIALKRLPFIGLVEEFEKSMTKLEETVREYFPEFKASVIRTNVQFSPDMPLEERLKIIKNEVGKDFYKKLMEINEEDMVLWEKVVDMYKEGF</sequence>
<protein>
    <recommendedName>
        <fullName>Uncharacterized protein AF_0307</fullName>
    </recommendedName>
</protein>
<gene>
    <name type="ordered locus">AF_0307</name>
</gene>
<accession>O29937</accession>